<keyword id="KW-0963">Cytoplasm</keyword>
<keyword id="KW-0507">mRNA processing</keyword>
<keyword id="KW-0508">mRNA splicing</keyword>
<keyword id="KW-0539">Nucleus</keyword>
<keyword id="KW-1185">Reference proteome</keyword>
<keyword id="KW-0687">Ribonucleoprotein</keyword>
<keyword id="KW-0694">RNA-binding</keyword>
<keyword id="KW-0747">Spliceosome</keyword>
<gene>
    <name evidence="6" type="primary">SNRPG</name>
    <name evidence="6" type="synonym">SmG</name>
    <name evidence="6" type="ORF">CG9742</name>
</gene>
<name>RUXG_DROME</name>
<sequence length="76" mass="8538">MSKAHPPEVKKYMDKRMMLKLNGGRAVTGILRGFDPFMNVVLDDTVEECKDNTKNNIGMVVIRGNSIVMVEALDRV</sequence>
<feature type="chain" id="PRO_0000125548" description="Probable small nuclear ribonucleoprotein G">
    <location>
        <begin position="1"/>
        <end position="76"/>
    </location>
</feature>
<feature type="domain" description="Sm" evidence="2">
    <location>
        <begin position="4"/>
        <end position="76"/>
    </location>
</feature>
<reference evidence="4" key="1">
    <citation type="journal article" date="2000" name="Science">
        <title>The genome sequence of Drosophila melanogaster.</title>
        <authorList>
            <person name="Adams M.D."/>
            <person name="Celniker S.E."/>
            <person name="Holt R.A."/>
            <person name="Evans C.A."/>
            <person name="Gocayne J.D."/>
            <person name="Amanatides P.G."/>
            <person name="Scherer S.E."/>
            <person name="Li P.W."/>
            <person name="Hoskins R.A."/>
            <person name="Galle R.F."/>
            <person name="George R.A."/>
            <person name="Lewis S.E."/>
            <person name="Richards S."/>
            <person name="Ashburner M."/>
            <person name="Henderson S.N."/>
            <person name="Sutton G.G."/>
            <person name="Wortman J.R."/>
            <person name="Yandell M.D."/>
            <person name="Zhang Q."/>
            <person name="Chen L.X."/>
            <person name="Brandon R.C."/>
            <person name="Rogers Y.-H.C."/>
            <person name="Blazej R.G."/>
            <person name="Champe M."/>
            <person name="Pfeiffer B.D."/>
            <person name="Wan K.H."/>
            <person name="Doyle C."/>
            <person name="Baxter E.G."/>
            <person name="Helt G."/>
            <person name="Nelson C.R."/>
            <person name="Miklos G.L.G."/>
            <person name="Abril J.F."/>
            <person name="Agbayani A."/>
            <person name="An H.-J."/>
            <person name="Andrews-Pfannkoch C."/>
            <person name="Baldwin D."/>
            <person name="Ballew R.M."/>
            <person name="Basu A."/>
            <person name="Baxendale J."/>
            <person name="Bayraktaroglu L."/>
            <person name="Beasley E.M."/>
            <person name="Beeson K.Y."/>
            <person name="Benos P.V."/>
            <person name="Berman B.P."/>
            <person name="Bhandari D."/>
            <person name="Bolshakov S."/>
            <person name="Borkova D."/>
            <person name="Botchan M.R."/>
            <person name="Bouck J."/>
            <person name="Brokstein P."/>
            <person name="Brottier P."/>
            <person name="Burtis K.C."/>
            <person name="Busam D.A."/>
            <person name="Butler H."/>
            <person name="Cadieu E."/>
            <person name="Center A."/>
            <person name="Chandra I."/>
            <person name="Cherry J.M."/>
            <person name="Cawley S."/>
            <person name="Dahlke C."/>
            <person name="Davenport L.B."/>
            <person name="Davies P."/>
            <person name="de Pablos B."/>
            <person name="Delcher A."/>
            <person name="Deng Z."/>
            <person name="Mays A.D."/>
            <person name="Dew I."/>
            <person name="Dietz S.M."/>
            <person name="Dodson K."/>
            <person name="Doup L.E."/>
            <person name="Downes M."/>
            <person name="Dugan-Rocha S."/>
            <person name="Dunkov B.C."/>
            <person name="Dunn P."/>
            <person name="Durbin K.J."/>
            <person name="Evangelista C.C."/>
            <person name="Ferraz C."/>
            <person name="Ferriera S."/>
            <person name="Fleischmann W."/>
            <person name="Fosler C."/>
            <person name="Gabrielian A.E."/>
            <person name="Garg N.S."/>
            <person name="Gelbart W.M."/>
            <person name="Glasser K."/>
            <person name="Glodek A."/>
            <person name="Gong F."/>
            <person name="Gorrell J.H."/>
            <person name="Gu Z."/>
            <person name="Guan P."/>
            <person name="Harris M."/>
            <person name="Harris N.L."/>
            <person name="Harvey D.A."/>
            <person name="Heiman T.J."/>
            <person name="Hernandez J.R."/>
            <person name="Houck J."/>
            <person name="Hostin D."/>
            <person name="Houston K.A."/>
            <person name="Howland T.J."/>
            <person name="Wei M.-H."/>
            <person name="Ibegwam C."/>
            <person name="Jalali M."/>
            <person name="Kalush F."/>
            <person name="Karpen G.H."/>
            <person name="Ke Z."/>
            <person name="Kennison J.A."/>
            <person name="Ketchum K.A."/>
            <person name="Kimmel B.E."/>
            <person name="Kodira C.D."/>
            <person name="Kraft C.L."/>
            <person name="Kravitz S."/>
            <person name="Kulp D."/>
            <person name="Lai Z."/>
            <person name="Lasko P."/>
            <person name="Lei Y."/>
            <person name="Levitsky A.A."/>
            <person name="Li J.H."/>
            <person name="Li Z."/>
            <person name="Liang Y."/>
            <person name="Lin X."/>
            <person name="Liu X."/>
            <person name="Mattei B."/>
            <person name="McIntosh T.C."/>
            <person name="McLeod M.P."/>
            <person name="McPherson D."/>
            <person name="Merkulov G."/>
            <person name="Milshina N.V."/>
            <person name="Mobarry C."/>
            <person name="Morris J."/>
            <person name="Moshrefi A."/>
            <person name="Mount S.M."/>
            <person name="Moy M."/>
            <person name="Murphy B."/>
            <person name="Murphy L."/>
            <person name="Muzny D.M."/>
            <person name="Nelson D.L."/>
            <person name="Nelson D.R."/>
            <person name="Nelson K.A."/>
            <person name="Nixon K."/>
            <person name="Nusskern D.R."/>
            <person name="Pacleb J.M."/>
            <person name="Palazzolo M."/>
            <person name="Pittman G.S."/>
            <person name="Pan S."/>
            <person name="Pollard J."/>
            <person name="Puri V."/>
            <person name="Reese M.G."/>
            <person name="Reinert K."/>
            <person name="Remington K."/>
            <person name="Saunders R.D.C."/>
            <person name="Scheeler F."/>
            <person name="Shen H."/>
            <person name="Shue B.C."/>
            <person name="Siden-Kiamos I."/>
            <person name="Simpson M."/>
            <person name="Skupski M.P."/>
            <person name="Smith T.J."/>
            <person name="Spier E."/>
            <person name="Spradling A.C."/>
            <person name="Stapleton M."/>
            <person name="Strong R."/>
            <person name="Sun E."/>
            <person name="Svirskas R."/>
            <person name="Tector C."/>
            <person name="Turner R."/>
            <person name="Venter E."/>
            <person name="Wang A.H."/>
            <person name="Wang X."/>
            <person name="Wang Z.-Y."/>
            <person name="Wassarman D.A."/>
            <person name="Weinstock G.M."/>
            <person name="Weissenbach J."/>
            <person name="Williams S.M."/>
            <person name="Woodage T."/>
            <person name="Worley K.C."/>
            <person name="Wu D."/>
            <person name="Yang S."/>
            <person name="Yao Q.A."/>
            <person name="Ye J."/>
            <person name="Yeh R.-F."/>
            <person name="Zaveri J.S."/>
            <person name="Zhan M."/>
            <person name="Zhang G."/>
            <person name="Zhao Q."/>
            <person name="Zheng L."/>
            <person name="Zheng X.H."/>
            <person name="Zhong F.N."/>
            <person name="Zhong W."/>
            <person name="Zhou X."/>
            <person name="Zhu S.C."/>
            <person name="Zhu X."/>
            <person name="Smith H.O."/>
            <person name="Gibbs R.A."/>
            <person name="Myers E.W."/>
            <person name="Rubin G.M."/>
            <person name="Venter J.C."/>
        </authorList>
    </citation>
    <scope>NUCLEOTIDE SEQUENCE [LARGE SCALE GENOMIC DNA]</scope>
    <source>
        <strain>Berkeley</strain>
    </source>
</reference>
<reference key="2">
    <citation type="journal article" date="2002" name="Genome Biol.">
        <title>Annotation of the Drosophila melanogaster euchromatic genome: a systematic review.</title>
        <authorList>
            <person name="Misra S."/>
            <person name="Crosby M.A."/>
            <person name="Mungall C.J."/>
            <person name="Matthews B.B."/>
            <person name="Campbell K.S."/>
            <person name="Hradecky P."/>
            <person name="Huang Y."/>
            <person name="Kaminker J.S."/>
            <person name="Millburn G.H."/>
            <person name="Prochnik S.E."/>
            <person name="Smith C.D."/>
            <person name="Tupy J.L."/>
            <person name="Whitfield E.J."/>
            <person name="Bayraktaroglu L."/>
            <person name="Berman B.P."/>
            <person name="Bettencourt B.R."/>
            <person name="Celniker S.E."/>
            <person name="de Grey A.D.N.J."/>
            <person name="Drysdale R.A."/>
            <person name="Harris N.L."/>
            <person name="Richter J."/>
            <person name="Russo S."/>
            <person name="Schroeder A.J."/>
            <person name="Shu S.Q."/>
            <person name="Stapleton M."/>
            <person name="Yamada C."/>
            <person name="Ashburner M."/>
            <person name="Gelbart W.M."/>
            <person name="Rubin G.M."/>
            <person name="Lewis S.E."/>
        </authorList>
    </citation>
    <scope>GENOME REANNOTATION</scope>
    <source>
        <strain>Berkeley</strain>
    </source>
</reference>
<reference key="3">
    <citation type="journal article" date="2002" name="Genome Biol.">
        <title>A Drosophila full-length cDNA resource.</title>
        <authorList>
            <person name="Stapleton M."/>
            <person name="Carlson J.W."/>
            <person name="Brokstein P."/>
            <person name="Yu C."/>
            <person name="Champe M."/>
            <person name="George R.A."/>
            <person name="Guarin H."/>
            <person name="Kronmiller B."/>
            <person name="Pacleb J.M."/>
            <person name="Park S."/>
            <person name="Wan K.H."/>
            <person name="Rubin G.M."/>
            <person name="Celniker S.E."/>
        </authorList>
    </citation>
    <scope>NUCLEOTIDE SEQUENCE [LARGE SCALE MRNA]</scope>
    <source>
        <strain>Berkeley</strain>
        <tissue>Embryo</tissue>
        <tissue>Head</tissue>
    </source>
</reference>
<reference key="4">
    <citation type="journal article" date="2000" name="J. Cell Biol.">
        <title>Pre-messenger RNA processing factors in the Drosophila genome.</title>
        <authorList>
            <person name="Mount S.M."/>
            <person name="Salz H.K."/>
        </authorList>
    </citation>
    <scope>IDENTIFICATION</scope>
</reference>
<reference key="5">
    <citation type="journal article" date="2008" name="Proc. Natl. Acad. Sci. U.S.A.">
        <title>Evolution of an RNP assembly system: a minimal SMN complex facilitates formation of UsnRNPs in Drosophila melanogaster.</title>
        <authorList>
            <person name="Kroiss M."/>
            <person name="Schultz J."/>
            <person name="Wiesner J."/>
            <person name="Chari A."/>
            <person name="Sickmann A."/>
            <person name="Fischer U."/>
        </authorList>
    </citation>
    <scope>FUNCTION</scope>
    <scope>INTERACTION WITH THE SMN COMPLEX</scope>
</reference>
<proteinExistence type="evidence at protein level"/>
<evidence type="ECO:0000250" key="1">
    <source>
        <dbReference type="UniProtKB" id="P62308"/>
    </source>
</evidence>
<evidence type="ECO:0000255" key="2">
    <source>
        <dbReference type="PROSITE-ProRule" id="PRU01346"/>
    </source>
</evidence>
<evidence type="ECO:0000269" key="3">
    <source>
    </source>
</evidence>
<evidence type="ECO:0000305" key="4"/>
<evidence type="ECO:0000312" key="5">
    <source>
        <dbReference type="EMBL" id="AAL48169.1"/>
    </source>
</evidence>
<evidence type="ECO:0000312" key="6">
    <source>
        <dbReference type="FlyBase" id="FBgn0261791"/>
    </source>
</evidence>
<protein>
    <recommendedName>
        <fullName>Probable small nuclear ribonucleoprotein G</fullName>
        <shortName>snRNP-G</shortName>
    </recommendedName>
    <alternativeName>
        <fullName>Sm protein G</fullName>
        <shortName>Sm-G</shortName>
        <shortName>SmG</shortName>
    </alternativeName>
</protein>
<accession>Q9VXE0</accession>
<accession>B7Z0Y9</accession>
<accession>Q8MYW8</accession>
<dbReference type="EMBL" id="AE014298">
    <property type="protein sequence ID" value="ACL82939.1"/>
    <property type="molecule type" value="Genomic_DNA"/>
</dbReference>
<dbReference type="EMBL" id="AY070698">
    <property type="protein sequence ID" value="AAL48169.1"/>
    <property type="molecule type" value="mRNA"/>
</dbReference>
<dbReference type="EMBL" id="AY113538">
    <property type="protein sequence ID" value="AAM29543.1"/>
    <property type="status" value="ALT_SEQ"/>
    <property type="molecule type" value="mRNA"/>
</dbReference>
<dbReference type="RefSeq" id="NP_001138209.1">
    <property type="nucleotide sequence ID" value="NM_001144737.2"/>
</dbReference>
<dbReference type="RefSeq" id="NP_573139.1">
    <property type="nucleotide sequence ID" value="NM_132911.3"/>
</dbReference>
<dbReference type="SMR" id="Q9VXE0"/>
<dbReference type="BioGRID" id="58972">
    <property type="interactions" value="8"/>
</dbReference>
<dbReference type="ComplexPortal" id="CPX-2559">
    <property type="entry name" value="U7 small nuclear ribonucleoprotein complex"/>
</dbReference>
<dbReference type="DIP" id="DIP-20715N"/>
<dbReference type="FunCoup" id="Q9VXE0">
    <property type="interactions" value="1714"/>
</dbReference>
<dbReference type="IntAct" id="Q9VXE0">
    <property type="interactions" value="113"/>
</dbReference>
<dbReference type="STRING" id="7227.FBpp0074151"/>
<dbReference type="PaxDb" id="7227-FBpp0074151"/>
<dbReference type="EnsemblMetazoa" id="FBtr0074377">
    <property type="protein sequence ID" value="FBpp0074151"/>
    <property type="gene ID" value="FBgn0261791"/>
</dbReference>
<dbReference type="EnsemblMetazoa" id="FBtr0112993">
    <property type="protein sequence ID" value="FBpp0111906"/>
    <property type="gene ID" value="FBgn0261791"/>
</dbReference>
<dbReference type="GeneID" id="32636"/>
<dbReference type="KEGG" id="dme:Dmel_CG9742"/>
<dbReference type="AGR" id="FB:FBgn0261791"/>
<dbReference type="CTD" id="6637"/>
<dbReference type="FlyBase" id="FBgn0261791">
    <property type="gene designation" value="SNRPG"/>
</dbReference>
<dbReference type="VEuPathDB" id="VectorBase:FBgn0261791"/>
<dbReference type="eggNOG" id="KOG1780">
    <property type="taxonomic scope" value="Eukaryota"/>
</dbReference>
<dbReference type="GeneTree" id="ENSGT00510000046985"/>
<dbReference type="HOGENOM" id="CLU_076902_10_1_1"/>
<dbReference type="InParanoid" id="Q9VXE0"/>
<dbReference type="OMA" id="MSKAQPP"/>
<dbReference type="OrthoDB" id="2146at2759"/>
<dbReference type="PhylomeDB" id="Q9VXE0"/>
<dbReference type="Reactome" id="R-DME-111367">
    <property type="pathway name" value="SLBP independent Processing of Histone Pre-mRNAs"/>
</dbReference>
<dbReference type="Reactome" id="R-DME-72163">
    <property type="pathway name" value="mRNA Splicing - Major Pathway"/>
</dbReference>
<dbReference type="Reactome" id="R-DME-72165">
    <property type="pathway name" value="mRNA Splicing - Minor Pathway"/>
</dbReference>
<dbReference type="Reactome" id="R-DME-73856">
    <property type="pathway name" value="RNA Polymerase II Transcription Termination"/>
</dbReference>
<dbReference type="Reactome" id="R-DME-77588">
    <property type="pathway name" value="SLBP Dependent Processing of Replication-Dependent Histone Pre-mRNAs"/>
</dbReference>
<dbReference type="BioGRID-ORCS" id="32636">
    <property type="hits" value="1 hit in 1 CRISPR screen"/>
</dbReference>
<dbReference type="GenomeRNAi" id="32636"/>
<dbReference type="PRO" id="PR:Q9VXE0"/>
<dbReference type="Proteomes" id="UP000000803">
    <property type="component" value="Chromosome X"/>
</dbReference>
<dbReference type="Bgee" id="FBgn0261791">
    <property type="expression patterns" value="Expressed in eye disc (Drosophila) and 166 other cell types or tissues"/>
</dbReference>
<dbReference type="ExpressionAtlas" id="Q9VXE0">
    <property type="expression patterns" value="baseline and differential"/>
</dbReference>
<dbReference type="GO" id="GO:0071013">
    <property type="term" value="C:catalytic step 2 spliceosome"/>
    <property type="evidence" value="ECO:0007005"/>
    <property type="project" value="FlyBase"/>
</dbReference>
<dbReference type="GO" id="GO:0005829">
    <property type="term" value="C:cytosol"/>
    <property type="evidence" value="ECO:0007669"/>
    <property type="project" value="UniProtKB-SubCell"/>
</dbReference>
<dbReference type="GO" id="GO:0005634">
    <property type="term" value="C:nucleus"/>
    <property type="evidence" value="ECO:0000314"/>
    <property type="project" value="FlyBase"/>
</dbReference>
<dbReference type="GO" id="GO:0043186">
    <property type="term" value="C:P granule"/>
    <property type="evidence" value="ECO:0000318"/>
    <property type="project" value="GO_Central"/>
</dbReference>
<dbReference type="GO" id="GO:0071011">
    <property type="term" value="C:precatalytic spliceosome"/>
    <property type="evidence" value="ECO:0007005"/>
    <property type="project" value="FlyBase"/>
</dbReference>
<dbReference type="GO" id="GO:0030532">
    <property type="term" value="C:small nuclear ribonucleoprotein complex"/>
    <property type="evidence" value="ECO:0000314"/>
    <property type="project" value="FlyBase"/>
</dbReference>
<dbReference type="GO" id="GO:0034719">
    <property type="term" value="C:SMN-Sm protein complex"/>
    <property type="evidence" value="ECO:0000318"/>
    <property type="project" value="GO_Central"/>
</dbReference>
<dbReference type="GO" id="GO:0005681">
    <property type="term" value="C:spliceosomal complex"/>
    <property type="evidence" value="ECO:0000250"/>
    <property type="project" value="FlyBase"/>
</dbReference>
<dbReference type="GO" id="GO:0097526">
    <property type="term" value="C:spliceosomal tri-snRNP complex"/>
    <property type="evidence" value="ECO:0000318"/>
    <property type="project" value="GO_Central"/>
</dbReference>
<dbReference type="GO" id="GO:0005685">
    <property type="term" value="C:U1 snRNP"/>
    <property type="evidence" value="ECO:0000318"/>
    <property type="project" value="GO_Central"/>
</dbReference>
<dbReference type="GO" id="GO:0005689">
    <property type="term" value="C:U12-type spliceosomal complex"/>
    <property type="evidence" value="ECO:0000318"/>
    <property type="project" value="GO_Central"/>
</dbReference>
<dbReference type="GO" id="GO:0005686">
    <property type="term" value="C:U2 snRNP"/>
    <property type="evidence" value="ECO:0000318"/>
    <property type="project" value="GO_Central"/>
</dbReference>
<dbReference type="GO" id="GO:0071004">
    <property type="term" value="C:U2-type prespliceosome"/>
    <property type="evidence" value="ECO:0000318"/>
    <property type="project" value="GO_Central"/>
</dbReference>
<dbReference type="GO" id="GO:0005687">
    <property type="term" value="C:U4 snRNP"/>
    <property type="evidence" value="ECO:0000318"/>
    <property type="project" value="GO_Central"/>
</dbReference>
<dbReference type="GO" id="GO:0005682">
    <property type="term" value="C:U5 snRNP"/>
    <property type="evidence" value="ECO:0000318"/>
    <property type="project" value="GO_Central"/>
</dbReference>
<dbReference type="GO" id="GO:0003723">
    <property type="term" value="F:RNA binding"/>
    <property type="evidence" value="ECO:0000250"/>
    <property type="project" value="FlyBase"/>
</dbReference>
<dbReference type="GO" id="GO:0000398">
    <property type="term" value="P:mRNA splicing, via spliceosome"/>
    <property type="evidence" value="ECO:0000318"/>
    <property type="project" value="GO_Central"/>
</dbReference>
<dbReference type="CDD" id="cd01719">
    <property type="entry name" value="Sm_G"/>
    <property type="match status" value="1"/>
</dbReference>
<dbReference type="FunFam" id="2.30.30.100:FF:000017">
    <property type="entry name" value="Small nuclear ribonucleoprotein G"/>
    <property type="match status" value="1"/>
</dbReference>
<dbReference type="Gene3D" id="2.30.30.100">
    <property type="match status" value="1"/>
</dbReference>
<dbReference type="InterPro" id="IPR044641">
    <property type="entry name" value="Lsm7/SmG-like"/>
</dbReference>
<dbReference type="InterPro" id="IPR010920">
    <property type="entry name" value="LSM_dom_sf"/>
</dbReference>
<dbReference type="InterPro" id="IPR047575">
    <property type="entry name" value="Sm"/>
</dbReference>
<dbReference type="InterPro" id="IPR001163">
    <property type="entry name" value="Sm_dom_euk/arc"/>
</dbReference>
<dbReference type="InterPro" id="IPR034098">
    <property type="entry name" value="Sm_G"/>
</dbReference>
<dbReference type="PANTHER" id="PTHR10553">
    <property type="entry name" value="SMALL NUCLEAR RIBONUCLEOPROTEIN"/>
    <property type="match status" value="1"/>
</dbReference>
<dbReference type="PANTHER" id="PTHR10553:SF2">
    <property type="entry name" value="SMALL NUCLEAR RIBONUCLEOPROTEIN G"/>
    <property type="match status" value="1"/>
</dbReference>
<dbReference type="Pfam" id="PF01423">
    <property type="entry name" value="LSM"/>
    <property type="match status" value="1"/>
</dbReference>
<dbReference type="PIRSF" id="PIRSF037188">
    <property type="entry name" value="U6_snRNA_Lsm7"/>
    <property type="match status" value="1"/>
</dbReference>
<dbReference type="SMART" id="SM00651">
    <property type="entry name" value="Sm"/>
    <property type="match status" value="1"/>
</dbReference>
<dbReference type="SUPFAM" id="SSF50182">
    <property type="entry name" value="Sm-like ribonucleoproteins"/>
    <property type="match status" value="1"/>
</dbReference>
<dbReference type="PROSITE" id="PS52002">
    <property type="entry name" value="SM"/>
    <property type="match status" value="1"/>
</dbReference>
<organism evidence="5">
    <name type="scientific">Drosophila melanogaster</name>
    <name type="common">Fruit fly</name>
    <dbReference type="NCBI Taxonomy" id="7227"/>
    <lineage>
        <taxon>Eukaryota</taxon>
        <taxon>Metazoa</taxon>
        <taxon>Ecdysozoa</taxon>
        <taxon>Arthropoda</taxon>
        <taxon>Hexapoda</taxon>
        <taxon>Insecta</taxon>
        <taxon>Pterygota</taxon>
        <taxon>Neoptera</taxon>
        <taxon>Endopterygota</taxon>
        <taxon>Diptera</taxon>
        <taxon>Brachycera</taxon>
        <taxon>Muscomorpha</taxon>
        <taxon>Ephydroidea</taxon>
        <taxon>Drosophilidae</taxon>
        <taxon>Drosophila</taxon>
        <taxon>Sophophora</taxon>
    </lineage>
</organism>
<comment type="function">
    <text evidence="1 3">Plays a role in pre-mRNA splicing as a core component of the spliceosomal U1, U2, U4 and U5 small nuclear ribonucleoproteins (snRNPs), the building blocks of the spliceosome (PubMed:18621711). Component of both the pre-catalytic spliceosome B complex and activated spliceosome C complexes. Is also a component of the minor U12 spliceosome (By similarity).</text>
</comment>
<comment type="subunit">
    <text evidence="1 3">Interacts with the SMN complex (PubMed:18621711). Core component of the spliceosomal U1, U2, U4 and U5 small nuclear ribonucleoproteins (snRNPs), the building blocks of the spliceosome. Most spliceosomal snRNPs contain a common set of Sm proteins, SNRPB, SNRPD1, SNRPD2, SNRPD3, SNRPE, SNRPF and SNRPG that assemble in a heptameric protein ring on the Sm site of the small nuclear RNA to form the core snRNP. Component of the U1 snRNP. Component of the U4/U6-U5 tri-snRNP complex. Component of the U7 snRNP complex. Component of the U11/U12 snRNPs that are part of the U12-type spliceosome (By similarity).</text>
</comment>
<comment type="interaction">
    <interactant intactId="EBI-174408">
        <id>Q9VXE0</id>
    </interactant>
    <interactant intactId="EBI-191064">
        <id>Q9VGN4</id>
        <label>sals</label>
    </interactant>
    <organismsDiffer>false</organismsDiffer>
    <experiments>2</experiments>
</comment>
<comment type="subcellular location">
    <subcellularLocation>
        <location evidence="1">Cytoplasm</location>
        <location evidence="1">Cytosol</location>
    </subcellularLocation>
    <subcellularLocation>
        <location evidence="1">Nucleus</location>
    </subcellularLocation>
    <text evidence="1">SMN-mediated assembly into core snRNPs occurs in the cytosol before SMN-mediated transport to the nucleus to be included in spliceosomes.</text>
</comment>
<comment type="similarity">
    <text evidence="4">Belongs to the snRNP Sm proteins family.</text>
</comment>
<comment type="sequence caution" evidence="4">
    <conflict type="miscellaneous discrepancy">
        <sequence resource="EMBL-CDS" id="AAM29543"/>
    </conflict>
    <text>Wrong choice of frame.</text>
</comment>